<reference key="1">
    <citation type="journal article" date="2009" name="PLoS Genet.">
        <title>Organised genome dynamics in the Escherichia coli species results in highly diverse adaptive paths.</title>
        <authorList>
            <person name="Touchon M."/>
            <person name="Hoede C."/>
            <person name="Tenaillon O."/>
            <person name="Barbe V."/>
            <person name="Baeriswyl S."/>
            <person name="Bidet P."/>
            <person name="Bingen E."/>
            <person name="Bonacorsi S."/>
            <person name="Bouchier C."/>
            <person name="Bouvet O."/>
            <person name="Calteau A."/>
            <person name="Chiapello H."/>
            <person name="Clermont O."/>
            <person name="Cruveiller S."/>
            <person name="Danchin A."/>
            <person name="Diard M."/>
            <person name="Dossat C."/>
            <person name="Karoui M.E."/>
            <person name="Frapy E."/>
            <person name="Garry L."/>
            <person name="Ghigo J.M."/>
            <person name="Gilles A.M."/>
            <person name="Johnson J."/>
            <person name="Le Bouguenec C."/>
            <person name="Lescat M."/>
            <person name="Mangenot S."/>
            <person name="Martinez-Jehanne V."/>
            <person name="Matic I."/>
            <person name="Nassif X."/>
            <person name="Oztas S."/>
            <person name="Petit M.A."/>
            <person name="Pichon C."/>
            <person name="Rouy Z."/>
            <person name="Ruf C.S."/>
            <person name="Schneider D."/>
            <person name="Tourret J."/>
            <person name="Vacherie B."/>
            <person name="Vallenet D."/>
            <person name="Medigue C."/>
            <person name="Rocha E.P.C."/>
            <person name="Denamur E."/>
        </authorList>
    </citation>
    <scope>NUCLEOTIDE SEQUENCE [LARGE SCALE GENOMIC DNA]</scope>
    <source>
        <strain>UMN026 / ExPEC</strain>
    </source>
</reference>
<keyword id="KW-0456">Lyase</keyword>
<keyword id="KW-0460">Magnesium</keyword>
<keyword id="KW-0479">Metal-binding</keyword>
<accession>B7NF09</accession>
<sequence>MKITKITTYRLPPRWMFLKIETDEGVVGWGEPVIEGRARTVEAAVHELGDYLIGQDPSRINDLWQVMYRAGFYRGGPILMSAIAGIDQALWDIKGKVLNAPVWQLMGGLVRDKIKAYSWVGGDRPADVIDGIKTLREIGFDTFKLNGCEELGLIDNSRAVDAAVNTVAQIREAFGNQIEFGLDFHGRVSAPMAKVLIKELEPYRPLFIEEPVLAEQAEYYPKLAAQTHIPLAAGERMFSRFDFKRVLEAGGISILQPDLSHAGGITECYKIAGMAEAYDVTLAPHCPLGPIALAACLHIDFVSYNAVLQEQSMGIHYNKGAELLDFVKNKEDFSMVGGFFKPLTKPGLGVEIDEAKVIEFSKNAPDWRNPLWRHEDNSVAEW</sequence>
<protein>
    <recommendedName>
        <fullName evidence="2">D-galactonate dehydratase</fullName>
        <shortName evidence="2">GalD</shortName>
        <ecNumber evidence="2">4.2.1.6</ecNumber>
    </recommendedName>
</protein>
<name>DGOD_ECOLU</name>
<feature type="chain" id="PRO_1000140381" description="D-galactonate dehydratase">
    <location>
        <begin position="1"/>
        <end position="382"/>
    </location>
</feature>
<feature type="active site" description="Proton donor" evidence="1">
    <location>
        <position position="185"/>
    </location>
</feature>
<feature type="active site" description="Proton acceptor" evidence="1">
    <location>
        <position position="285"/>
    </location>
</feature>
<feature type="binding site" evidence="2">
    <location>
        <position position="183"/>
    </location>
    <ligand>
        <name>Mg(2+)</name>
        <dbReference type="ChEBI" id="CHEBI:18420"/>
    </ligand>
</feature>
<feature type="binding site" evidence="2">
    <location>
        <position position="209"/>
    </location>
    <ligand>
        <name>Mg(2+)</name>
        <dbReference type="ChEBI" id="CHEBI:18420"/>
    </ligand>
</feature>
<feature type="binding site" evidence="2">
    <location>
        <position position="235"/>
    </location>
    <ligand>
        <name>Mg(2+)</name>
        <dbReference type="ChEBI" id="CHEBI:18420"/>
    </ligand>
</feature>
<feature type="site" description="Increases basicity of active site His" evidence="2">
    <location>
        <position position="258"/>
    </location>
</feature>
<feature type="site" description="Transition state stabilizer" evidence="2">
    <location>
        <position position="310"/>
    </location>
</feature>
<evidence type="ECO:0000250" key="1"/>
<evidence type="ECO:0000255" key="2">
    <source>
        <dbReference type="HAMAP-Rule" id="MF_01289"/>
    </source>
</evidence>
<comment type="function">
    <text evidence="2">Catalyzes the dehydration of D-galactonate to 2-keto-3-deoxy-D-galactonate.</text>
</comment>
<comment type="catalytic activity">
    <reaction evidence="2">
        <text>D-galactonate = 2-dehydro-3-deoxy-D-galactonate + H2O</text>
        <dbReference type="Rhea" id="RHEA:18649"/>
        <dbReference type="ChEBI" id="CHEBI:12931"/>
        <dbReference type="ChEBI" id="CHEBI:15377"/>
        <dbReference type="ChEBI" id="CHEBI:57989"/>
        <dbReference type="EC" id="4.2.1.6"/>
    </reaction>
</comment>
<comment type="cofactor">
    <cofactor evidence="2">
        <name>Mg(2+)</name>
        <dbReference type="ChEBI" id="CHEBI:18420"/>
    </cofactor>
    <text evidence="2">Binds 1 Mg(2+) ion per subunit.</text>
</comment>
<comment type="pathway">
    <text evidence="2">Carbohydrate acid metabolism; D-galactonate degradation; D-glyceraldehyde 3-phosphate and pyruvate from D-galactonate: step 1/3.</text>
</comment>
<comment type="miscellaneous">
    <text evidence="2">Reaction proceeds via an anti dehydration.</text>
</comment>
<comment type="similarity">
    <text evidence="2">Belongs to the mandelate racemase/muconate lactonizing enzyme family. GalD subfamily.</text>
</comment>
<dbReference type="EC" id="4.2.1.6" evidence="2"/>
<dbReference type="EMBL" id="CU928163">
    <property type="protein sequence ID" value="CAR15363.1"/>
    <property type="molecule type" value="Genomic_DNA"/>
</dbReference>
<dbReference type="RefSeq" id="WP_000705001.1">
    <property type="nucleotide sequence ID" value="NC_011751.1"/>
</dbReference>
<dbReference type="RefSeq" id="YP_002414857.1">
    <property type="nucleotide sequence ID" value="NC_011751.1"/>
</dbReference>
<dbReference type="SMR" id="B7NF09"/>
<dbReference type="STRING" id="585056.ECUMN_4223"/>
<dbReference type="GeneID" id="75205406"/>
<dbReference type="KEGG" id="eum:ECUMN_4223"/>
<dbReference type="PATRIC" id="fig|585056.7.peg.4395"/>
<dbReference type="HOGENOM" id="CLU_030273_3_2_6"/>
<dbReference type="UniPathway" id="UPA00081">
    <property type="reaction ID" value="UER00518"/>
</dbReference>
<dbReference type="Proteomes" id="UP000007097">
    <property type="component" value="Chromosome"/>
</dbReference>
<dbReference type="GO" id="GO:0008869">
    <property type="term" value="F:galactonate dehydratase activity"/>
    <property type="evidence" value="ECO:0007669"/>
    <property type="project" value="UniProtKB-UniRule"/>
</dbReference>
<dbReference type="GO" id="GO:0000287">
    <property type="term" value="F:magnesium ion binding"/>
    <property type="evidence" value="ECO:0007669"/>
    <property type="project" value="UniProtKB-UniRule"/>
</dbReference>
<dbReference type="GO" id="GO:0009063">
    <property type="term" value="P:amino acid catabolic process"/>
    <property type="evidence" value="ECO:0007669"/>
    <property type="project" value="InterPro"/>
</dbReference>
<dbReference type="GO" id="GO:0034194">
    <property type="term" value="P:D-galactonate catabolic process"/>
    <property type="evidence" value="ECO:0007669"/>
    <property type="project" value="UniProtKB-UniRule"/>
</dbReference>
<dbReference type="CDD" id="cd03325">
    <property type="entry name" value="D-galactonate_dehydratase"/>
    <property type="match status" value="1"/>
</dbReference>
<dbReference type="FunFam" id="3.20.20.120:FF:000008">
    <property type="entry name" value="D-galactonate dehydratase"/>
    <property type="match status" value="1"/>
</dbReference>
<dbReference type="FunFam" id="3.30.390.10:FF:000003">
    <property type="entry name" value="D-galactonate dehydratase"/>
    <property type="match status" value="1"/>
</dbReference>
<dbReference type="Gene3D" id="3.20.20.120">
    <property type="entry name" value="Enolase-like C-terminal domain"/>
    <property type="match status" value="1"/>
</dbReference>
<dbReference type="Gene3D" id="3.30.390.10">
    <property type="entry name" value="Enolase-like, N-terminal domain"/>
    <property type="match status" value="1"/>
</dbReference>
<dbReference type="HAMAP" id="MF_01289">
    <property type="entry name" value="Galacton_dehydrat"/>
    <property type="match status" value="1"/>
</dbReference>
<dbReference type="InterPro" id="IPR034593">
    <property type="entry name" value="DgoD-like"/>
</dbReference>
<dbReference type="InterPro" id="IPR036849">
    <property type="entry name" value="Enolase-like_C_sf"/>
</dbReference>
<dbReference type="InterPro" id="IPR029017">
    <property type="entry name" value="Enolase-like_N"/>
</dbReference>
<dbReference type="InterPro" id="IPR029065">
    <property type="entry name" value="Enolase_C-like"/>
</dbReference>
<dbReference type="InterPro" id="IPR023592">
    <property type="entry name" value="Galactonate_deHydtase"/>
</dbReference>
<dbReference type="InterPro" id="IPR018110">
    <property type="entry name" value="Mandel_Rmase/mucon_lact_enz_CS"/>
</dbReference>
<dbReference type="InterPro" id="IPR013342">
    <property type="entry name" value="Mandelate_racemase_C"/>
</dbReference>
<dbReference type="InterPro" id="IPR013341">
    <property type="entry name" value="Mandelate_racemase_N_dom"/>
</dbReference>
<dbReference type="NCBIfam" id="NF010624">
    <property type="entry name" value="PRK14017.1"/>
    <property type="match status" value="1"/>
</dbReference>
<dbReference type="PANTHER" id="PTHR48080:SF2">
    <property type="entry name" value="D-GALACTONATE DEHYDRATASE"/>
    <property type="match status" value="1"/>
</dbReference>
<dbReference type="PANTHER" id="PTHR48080">
    <property type="entry name" value="D-GALACTONATE DEHYDRATASE-RELATED"/>
    <property type="match status" value="1"/>
</dbReference>
<dbReference type="Pfam" id="PF13378">
    <property type="entry name" value="MR_MLE_C"/>
    <property type="match status" value="1"/>
</dbReference>
<dbReference type="Pfam" id="PF02746">
    <property type="entry name" value="MR_MLE_N"/>
    <property type="match status" value="1"/>
</dbReference>
<dbReference type="SFLD" id="SFLDF00003">
    <property type="entry name" value="D-galactonate_dehydratase"/>
    <property type="match status" value="1"/>
</dbReference>
<dbReference type="SFLD" id="SFLDS00001">
    <property type="entry name" value="Enolase"/>
    <property type="match status" value="1"/>
</dbReference>
<dbReference type="SMART" id="SM00922">
    <property type="entry name" value="MR_MLE"/>
    <property type="match status" value="1"/>
</dbReference>
<dbReference type="SUPFAM" id="SSF51604">
    <property type="entry name" value="Enolase C-terminal domain-like"/>
    <property type="match status" value="1"/>
</dbReference>
<dbReference type="SUPFAM" id="SSF54826">
    <property type="entry name" value="Enolase N-terminal domain-like"/>
    <property type="match status" value="1"/>
</dbReference>
<dbReference type="PROSITE" id="PS00908">
    <property type="entry name" value="MR_MLE_1"/>
    <property type="match status" value="1"/>
</dbReference>
<dbReference type="PROSITE" id="PS00909">
    <property type="entry name" value="MR_MLE_2"/>
    <property type="match status" value="1"/>
</dbReference>
<gene>
    <name evidence="2" type="primary">dgoD</name>
    <name type="ordered locus">ECUMN_4223</name>
</gene>
<organism>
    <name type="scientific">Escherichia coli O17:K52:H18 (strain UMN026 / ExPEC)</name>
    <dbReference type="NCBI Taxonomy" id="585056"/>
    <lineage>
        <taxon>Bacteria</taxon>
        <taxon>Pseudomonadati</taxon>
        <taxon>Pseudomonadota</taxon>
        <taxon>Gammaproteobacteria</taxon>
        <taxon>Enterobacterales</taxon>
        <taxon>Enterobacteriaceae</taxon>
        <taxon>Escherichia</taxon>
    </lineage>
</organism>
<proteinExistence type="inferred from homology"/>